<name>RNH2_CLOPS</name>
<dbReference type="EC" id="3.1.26.4" evidence="1"/>
<dbReference type="EMBL" id="CP000312">
    <property type="protein sequence ID" value="ABG85631.1"/>
    <property type="molecule type" value="Genomic_DNA"/>
</dbReference>
<dbReference type="RefSeq" id="WP_011592604.1">
    <property type="nucleotide sequence ID" value="NC_008262.1"/>
</dbReference>
<dbReference type="SMR" id="Q0SSB4"/>
<dbReference type="KEGG" id="cpr:CPR_1678"/>
<dbReference type="Proteomes" id="UP000001824">
    <property type="component" value="Chromosome"/>
</dbReference>
<dbReference type="GO" id="GO:0005737">
    <property type="term" value="C:cytoplasm"/>
    <property type="evidence" value="ECO:0007669"/>
    <property type="project" value="UniProtKB-SubCell"/>
</dbReference>
<dbReference type="GO" id="GO:0032299">
    <property type="term" value="C:ribonuclease H2 complex"/>
    <property type="evidence" value="ECO:0007669"/>
    <property type="project" value="TreeGrafter"/>
</dbReference>
<dbReference type="GO" id="GO:0030145">
    <property type="term" value="F:manganese ion binding"/>
    <property type="evidence" value="ECO:0007669"/>
    <property type="project" value="UniProtKB-UniRule"/>
</dbReference>
<dbReference type="GO" id="GO:0003723">
    <property type="term" value="F:RNA binding"/>
    <property type="evidence" value="ECO:0007669"/>
    <property type="project" value="InterPro"/>
</dbReference>
<dbReference type="GO" id="GO:0004523">
    <property type="term" value="F:RNA-DNA hybrid ribonuclease activity"/>
    <property type="evidence" value="ECO:0007669"/>
    <property type="project" value="UniProtKB-UniRule"/>
</dbReference>
<dbReference type="GO" id="GO:0043137">
    <property type="term" value="P:DNA replication, removal of RNA primer"/>
    <property type="evidence" value="ECO:0007669"/>
    <property type="project" value="TreeGrafter"/>
</dbReference>
<dbReference type="GO" id="GO:0006298">
    <property type="term" value="P:mismatch repair"/>
    <property type="evidence" value="ECO:0007669"/>
    <property type="project" value="TreeGrafter"/>
</dbReference>
<dbReference type="CDD" id="cd07182">
    <property type="entry name" value="RNase_HII_bacteria_HII_like"/>
    <property type="match status" value="1"/>
</dbReference>
<dbReference type="Gene3D" id="3.30.420.10">
    <property type="entry name" value="Ribonuclease H-like superfamily/Ribonuclease H"/>
    <property type="match status" value="1"/>
</dbReference>
<dbReference type="HAMAP" id="MF_00052_B">
    <property type="entry name" value="RNase_HII_B"/>
    <property type="match status" value="1"/>
</dbReference>
<dbReference type="InterPro" id="IPR022898">
    <property type="entry name" value="RNase_HII"/>
</dbReference>
<dbReference type="InterPro" id="IPR001352">
    <property type="entry name" value="RNase_HII/HIII"/>
</dbReference>
<dbReference type="InterPro" id="IPR024567">
    <property type="entry name" value="RNase_HII/HIII_dom"/>
</dbReference>
<dbReference type="InterPro" id="IPR012337">
    <property type="entry name" value="RNaseH-like_sf"/>
</dbReference>
<dbReference type="InterPro" id="IPR036397">
    <property type="entry name" value="RNaseH_sf"/>
</dbReference>
<dbReference type="NCBIfam" id="NF000594">
    <property type="entry name" value="PRK00015.1-1"/>
    <property type="match status" value="1"/>
</dbReference>
<dbReference type="NCBIfam" id="NF000595">
    <property type="entry name" value="PRK00015.1-3"/>
    <property type="match status" value="1"/>
</dbReference>
<dbReference type="PANTHER" id="PTHR10954">
    <property type="entry name" value="RIBONUCLEASE H2 SUBUNIT A"/>
    <property type="match status" value="1"/>
</dbReference>
<dbReference type="PANTHER" id="PTHR10954:SF18">
    <property type="entry name" value="RIBONUCLEASE HII"/>
    <property type="match status" value="1"/>
</dbReference>
<dbReference type="Pfam" id="PF01351">
    <property type="entry name" value="RNase_HII"/>
    <property type="match status" value="1"/>
</dbReference>
<dbReference type="SUPFAM" id="SSF53098">
    <property type="entry name" value="Ribonuclease H-like"/>
    <property type="match status" value="1"/>
</dbReference>
<dbReference type="PROSITE" id="PS51975">
    <property type="entry name" value="RNASE_H_2"/>
    <property type="match status" value="1"/>
</dbReference>
<reference key="1">
    <citation type="journal article" date="2006" name="Genome Res.">
        <title>Skewed genomic variability in strains of the toxigenic bacterial pathogen, Clostridium perfringens.</title>
        <authorList>
            <person name="Myers G.S.A."/>
            <person name="Rasko D.A."/>
            <person name="Cheung J.K."/>
            <person name="Ravel J."/>
            <person name="Seshadri R."/>
            <person name="DeBoy R.T."/>
            <person name="Ren Q."/>
            <person name="Varga J."/>
            <person name="Awad M.M."/>
            <person name="Brinkac L.M."/>
            <person name="Daugherty S.C."/>
            <person name="Haft D.H."/>
            <person name="Dodson R.J."/>
            <person name="Madupu R."/>
            <person name="Nelson W.C."/>
            <person name="Rosovitz M.J."/>
            <person name="Sullivan S.A."/>
            <person name="Khouri H."/>
            <person name="Dimitrov G.I."/>
            <person name="Watkins K.L."/>
            <person name="Mulligan S."/>
            <person name="Benton J."/>
            <person name="Radune D."/>
            <person name="Fisher D.J."/>
            <person name="Atkins H.S."/>
            <person name="Hiscox T."/>
            <person name="Jost B.H."/>
            <person name="Billington S.J."/>
            <person name="Songer J.G."/>
            <person name="McClane B.A."/>
            <person name="Titball R.W."/>
            <person name="Rood J.I."/>
            <person name="Melville S.B."/>
            <person name="Paulsen I.T."/>
        </authorList>
    </citation>
    <scope>NUCLEOTIDE SEQUENCE [LARGE SCALE GENOMIC DNA]</scope>
    <source>
        <strain>SM101 / Type A</strain>
    </source>
</reference>
<feature type="chain" id="PRO_0000334886" description="Ribonuclease HII">
    <location>
        <begin position="1"/>
        <end position="272"/>
    </location>
</feature>
<feature type="domain" description="RNase H type-2" evidence="2">
    <location>
        <begin position="87"/>
        <end position="272"/>
    </location>
</feature>
<feature type="binding site" evidence="1">
    <location>
        <position position="93"/>
    </location>
    <ligand>
        <name>a divalent metal cation</name>
        <dbReference type="ChEBI" id="CHEBI:60240"/>
    </ligand>
</feature>
<feature type="binding site" evidence="1">
    <location>
        <position position="94"/>
    </location>
    <ligand>
        <name>a divalent metal cation</name>
        <dbReference type="ChEBI" id="CHEBI:60240"/>
    </ligand>
</feature>
<feature type="binding site" evidence="1">
    <location>
        <position position="188"/>
    </location>
    <ligand>
        <name>a divalent metal cation</name>
        <dbReference type="ChEBI" id="CHEBI:60240"/>
    </ligand>
</feature>
<comment type="function">
    <text evidence="1">Endonuclease that specifically degrades the RNA of RNA-DNA hybrids.</text>
</comment>
<comment type="catalytic activity">
    <reaction evidence="1">
        <text>Endonucleolytic cleavage to 5'-phosphomonoester.</text>
        <dbReference type="EC" id="3.1.26.4"/>
    </reaction>
</comment>
<comment type="cofactor">
    <cofactor evidence="1">
        <name>Mn(2+)</name>
        <dbReference type="ChEBI" id="CHEBI:29035"/>
    </cofactor>
    <cofactor evidence="1">
        <name>Mg(2+)</name>
        <dbReference type="ChEBI" id="CHEBI:18420"/>
    </cofactor>
    <text evidence="1">Manganese or magnesium. Binds 1 divalent metal ion per monomer in the absence of substrate. May bind a second metal ion after substrate binding.</text>
</comment>
<comment type="subcellular location">
    <subcellularLocation>
        <location evidence="1">Cytoplasm</location>
    </subcellularLocation>
</comment>
<comment type="similarity">
    <text evidence="1">Belongs to the RNase HII family.</text>
</comment>
<keyword id="KW-0963">Cytoplasm</keyword>
<keyword id="KW-0255">Endonuclease</keyword>
<keyword id="KW-0378">Hydrolase</keyword>
<keyword id="KW-0464">Manganese</keyword>
<keyword id="KW-0479">Metal-binding</keyword>
<keyword id="KW-0540">Nuclease</keyword>
<organism>
    <name type="scientific">Clostridium perfringens (strain SM101 / Type A)</name>
    <dbReference type="NCBI Taxonomy" id="289380"/>
    <lineage>
        <taxon>Bacteria</taxon>
        <taxon>Bacillati</taxon>
        <taxon>Bacillota</taxon>
        <taxon>Clostridia</taxon>
        <taxon>Eubacteriales</taxon>
        <taxon>Clostridiaceae</taxon>
        <taxon>Clostridium</taxon>
    </lineage>
</organism>
<proteinExistence type="inferred from homology"/>
<evidence type="ECO:0000255" key="1">
    <source>
        <dbReference type="HAMAP-Rule" id="MF_00052"/>
    </source>
</evidence>
<evidence type="ECO:0000255" key="2">
    <source>
        <dbReference type="PROSITE-ProRule" id="PRU01319"/>
    </source>
</evidence>
<sequence length="272" mass="30972">MDNLIKDMRENLNSYSFKVVSDLVKELDVNRDNKAQIKELADLLKEDKRKNVSSLGNRLEKNLNNLIKEEERVKNMYFFDKSFGDYKYVAGVDEVGRGPLAGPIVSAAVILDSSNLDDIILYINDSKKLSEHKREELSEIIKEKALSYSISMCDSKEIDEKGIGYCNNHVFIKACEGLNIKPDLVLSDGYLIKNFNGENKHVIKGDTKSACIACASIIAKVYRDNIMKEYHKKYPQYDFEKNVGYGTKTHVDALKEVGPTEIHRMSFLKNIL</sequence>
<accession>Q0SSB4</accession>
<protein>
    <recommendedName>
        <fullName evidence="1">Ribonuclease HII</fullName>
        <shortName evidence="1">RNase HII</shortName>
        <ecNumber evidence="1">3.1.26.4</ecNumber>
    </recommendedName>
</protein>
<gene>
    <name evidence="1" type="primary">rnhB</name>
    <name type="ordered locus">CPR_1678</name>
</gene>